<keyword id="KW-0067">ATP-binding</keyword>
<keyword id="KW-0436">Ligase</keyword>
<keyword id="KW-0460">Magnesium</keyword>
<keyword id="KW-0464">Manganese</keyword>
<keyword id="KW-0479">Metal-binding</keyword>
<keyword id="KW-0547">Nucleotide-binding</keyword>
<keyword id="KW-0648">Protein biosynthesis</keyword>
<keyword id="KW-1185">Reference proteome</keyword>
<dbReference type="EC" id="6.3.2.-" evidence="1"/>
<dbReference type="EMBL" id="CP000606">
    <property type="protein sequence ID" value="ABO25530.1"/>
    <property type="molecule type" value="Genomic_DNA"/>
</dbReference>
<dbReference type="RefSeq" id="WP_011867458.1">
    <property type="nucleotide sequence ID" value="NC_009092.1"/>
</dbReference>
<dbReference type="SMR" id="A3QJ82"/>
<dbReference type="STRING" id="323850.Shew_3664"/>
<dbReference type="KEGG" id="slo:Shew_3664"/>
<dbReference type="eggNOG" id="COG0189">
    <property type="taxonomic scope" value="Bacteria"/>
</dbReference>
<dbReference type="HOGENOM" id="CLU_054353_0_1_6"/>
<dbReference type="OrthoDB" id="3865600at2"/>
<dbReference type="Proteomes" id="UP000001558">
    <property type="component" value="Chromosome"/>
</dbReference>
<dbReference type="GO" id="GO:0005737">
    <property type="term" value="C:cytoplasm"/>
    <property type="evidence" value="ECO:0007669"/>
    <property type="project" value="TreeGrafter"/>
</dbReference>
<dbReference type="GO" id="GO:0005524">
    <property type="term" value="F:ATP binding"/>
    <property type="evidence" value="ECO:0007669"/>
    <property type="project" value="UniProtKB-UniRule"/>
</dbReference>
<dbReference type="GO" id="GO:0046872">
    <property type="term" value="F:metal ion binding"/>
    <property type="evidence" value="ECO:0007669"/>
    <property type="project" value="UniProtKB-KW"/>
</dbReference>
<dbReference type="GO" id="GO:0018169">
    <property type="term" value="F:ribosomal S6-glutamic acid ligase activity"/>
    <property type="evidence" value="ECO:0007669"/>
    <property type="project" value="TreeGrafter"/>
</dbReference>
<dbReference type="GO" id="GO:0036211">
    <property type="term" value="P:protein modification process"/>
    <property type="evidence" value="ECO:0007669"/>
    <property type="project" value="InterPro"/>
</dbReference>
<dbReference type="GO" id="GO:0009432">
    <property type="term" value="P:SOS response"/>
    <property type="evidence" value="ECO:0007669"/>
    <property type="project" value="TreeGrafter"/>
</dbReference>
<dbReference type="GO" id="GO:0006412">
    <property type="term" value="P:translation"/>
    <property type="evidence" value="ECO:0007669"/>
    <property type="project" value="UniProtKB-KW"/>
</dbReference>
<dbReference type="FunFam" id="3.40.50.20:FF:000004">
    <property type="entry name" value="Probable alpha-L-glutamate ligase"/>
    <property type="match status" value="1"/>
</dbReference>
<dbReference type="FunFam" id="3.30.1490.20:FF:000005">
    <property type="entry name" value="Probable alpha-L-glutamate ligase 1"/>
    <property type="match status" value="1"/>
</dbReference>
<dbReference type="Gene3D" id="3.40.50.20">
    <property type="match status" value="1"/>
</dbReference>
<dbReference type="Gene3D" id="3.30.1490.20">
    <property type="entry name" value="ATP-grasp fold, A domain"/>
    <property type="match status" value="1"/>
</dbReference>
<dbReference type="Gene3D" id="3.30.470.20">
    <property type="entry name" value="ATP-grasp fold, B domain"/>
    <property type="match status" value="1"/>
</dbReference>
<dbReference type="HAMAP" id="MF_01552">
    <property type="entry name" value="RimK"/>
    <property type="match status" value="1"/>
</dbReference>
<dbReference type="InterPro" id="IPR011761">
    <property type="entry name" value="ATP-grasp"/>
</dbReference>
<dbReference type="InterPro" id="IPR013651">
    <property type="entry name" value="ATP-grasp_RimK-type"/>
</dbReference>
<dbReference type="InterPro" id="IPR013815">
    <property type="entry name" value="ATP_grasp_subdomain_1"/>
</dbReference>
<dbReference type="InterPro" id="IPR023533">
    <property type="entry name" value="RimK"/>
</dbReference>
<dbReference type="InterPro" id="IPR041107">
    <property type="entry name" value="Rimk_N"/>
</dbReference>
<dbReference type="InterPro" id="IPR004666">
    <property type="entry name" value="Rp_bS6_RimK/Lys_biosynth_LsyX"/>
</dbReference>
<dbReference type="NCBIfam" id="NF007764">
    <property type="entry name" value="PRK10446.1"/>
    <property type="match status" value="1"/>
</dbReference>
<dbReference type="NCBIfam" id="TIGR00768">
    <property type="entry name" value="rimK_fam"/>
    <property type="match status" value="1"/>
</dbReference>
<dbReference type="PANTHER" id="PTHR21621:SF7">
    <property type="entry name" value="RIBOSOMAL PROTEIN BS6--L-GLUTAMATE LIGASE"/>
    <property type="match status" value="1"/>
</dbReference>
<dbReference type="PANTHER" id="PTHR21621">
    <property type="entry name" value="RIBOSOMAL PROTEIN S6 MODIFICATION PROTEIN"/>
    <property type="match status" value="1"/>
</dbReference>
<dbReference type="Pfam" id="PF08443">
    <property type="entry name" value="RimK"/>
    <property type="match status" value="1"/>
</dbReference>
<dbReference type="Pfam" id="PF18030">
    <property type="entry name" value="Rimk_N"/>
    <property type="match status" value="1"/>
</dbReference>
<dbReference type="SUPFAM" id="SSF56059">
    <property type="entry name" value="Glutathione synthetase ATP-binding domain-like"/>
    <property type="match status" value="1"/>
</dbReference>
<dbReference type="PROSITE" id="PS50975">
    <property type="entry name" value="ATP_GRASP"/>
    <property type="match status" value="1"/>
</dbReference>
<feature type="chain" id="PRO_1000068856" description="Probable alpha-L-glutamate ligase">
    <location>
        <begin position="1"/>
        <end position="301"/>
    </location>
</feature>
<feature type="domain" description="ATP-grasp" evidence="1">
    <location>
        <begin position="104"/>
        <end position="287"/>
    </location>
</feature>
<feature type="binding site" evidence="1">
    <location>
        <position position="141"/>
    </location>
    <ligand>
        <name>ATP</name>
        <dbReference type="ChEBI" id="CHEBI:30616"/>
    </ligand>
</feature>
<feature type="binding site" evidence="1">
    <location>
        <begin position="178"/>
        <end position="179"/>
    </location>
    <ligand>
        <name>ATP</name>
        <dbReference type="ChEBI" id="CHEBI:30616"/>
    </ligand>
</feature>
<feature type="binding site" evidence="1">
    <location>
        <position position="187"/>
    </location>
    <ligand>
        <name>ATP</name>
        <dbReference type="ChEBI" id="CHEBI:30616"/>
    </ligand>
</feature>
<feature type="binding site" evidence="1">
    <location>
        <begin position="211"/>
        <end position="213"/>
    </location>
    <ligand>
        <name>ATP</name>
        <dbReference type="ChEBI" id="CHEBI:30616"/>
    </ligand>
</feature>
<feature type="binding site" evidence="1">
    <location>
        <position position="248"/>
    </location>
    <ligand>
        <name>Mg(2+)</name>
        <dbReference type="ChEBI" id="CHEBI:18420"/>
        <label>1</label>
    </ligand>
</feature>
<feature type="binding site" evidence="1">
    <location>
        <position position="248"/>
    </location>
    <ligand>
        <name>Mn(2+)</name>
        <dbReference type="ChEBI" id="CHEBI:29035"/>
        <label>1</label>
    </ligand>
</feature>
<feature type="binding site" evidence="1">
    <location>
        <position position="260"/>
    </location>
    <ligand>
        <name>Mg(2+)</name>
        <dbReference type="ChEBI" id="CHEBI:18420"/>
        <label>1</label>
    </ligand>
</feature>
<feature type="binding site" evidence="1">
    <location>
        <position position="260"/>
    </location>
    <ligand>
        <name>Mg(2+)</name>
        <dbReference type="ChEBI" id="CHEBI:18420"/>
        <label>2</label>
    </ligand>
</feature>
<feature type="binding site" evidence="1">
    <location>
        <position position="260"/>
    </location>
    <ligand>
        <name>Mn(2+)</name>
        <dbReference type="ChEBI" id="CHEBI:29035"/>
        <label>1</label>
    </ligand>
</feature>
<feature type="binding site" evidence="1">
    <location>
        <position position="260"/>
    </location>
    <ligand>
        <name>Mn(2+)</name>
        <dbReference type="ChEBI" id="CHEBI:29035"/>
        <label>2</label>
    </ligand>
</feature>
<feature type="binding site" evidence="1">
    <location>
        <position position="262"/>
    </location>
    <ligand>
        <name>Mg(2+)</name>
        <dbReference type="ChEBI" id="CHEBI:18420"/>
        <label>2</label>
    </ligand>
</feature>
<feature type="binding site" evidence="1">
    <location>
        <position position="262"/>
    </location>
    <ligand>
        <name>Mn(2+)</name>
        <dbReference type="ChEBI" id="CHEBI:29035"/>
        <label>2</label>
    </ligand>
</feature>
<sequence>MRIAILSRNENLYSTQRLKEAGEARGHEVDIIDTLHCYMDITSSNPTVRYMGKVLPKYDAVIPRIGSSITFYGTAVVRQFEMMGTFCVNESVAISRSRDKLRSLQLLSRKGIGLPRTGFASKPDKIQDLIKNVGGAPLVIKLLEGTQGIGVVLAETNKAAESVIEAFMGLKANILVQEFIKEAGGADIRCFVVGDKVVAAMKRQAAEGEFRSNLHRGGVAQLVRLSKDERATALNAAKAMGLNLCGVDILQSNNGPVVMEVNSSPGLEGIEQATGKDVAGLIYEFIEKKAKPNANRTRGKG</sequence>
<accession>A3QJ82</accession>
<comment type="cofactor">
    <cofactor evidence="1">
        <name>Mg(2+)</name>
        <dbReference type="ChEBI" id="CHEBI:18420"/>
    </cofactor>
    <cofactor evidence="1">
        <name>Mn(2+)</name>
        <dbReference type="ChEBI" id="CHEBI:29035"/>
    </cofactor>
    <text evidence="1">Binds 2 magnesium or manganese ions per subunit.</text>
</comment>
<comment type="similarity">
    <text evidence="1">Belongs to the RimK family.</text>
</comment>
<protein>
    <recommendedName>
        <fullName evidence="1">Probable alpha-L-glutamate ligase</fullName>
        <ecNumber evidence="1">6.3.2.-</ecNumber>
    </recommendedName>
</protein>
<evidence type="ECO:0000255" key="1">
    <source>
        <dbReference type="HAMAP-Rule" id="MF_01552"/>
    </source>
</evidence>
<name>RIMK_SHELP</name>
<proteinExistence type="inferred from homology"/>
<reference key="1">
    <citation type="submission" date="2007-03" db="EMBL/GenBank/DDBJ databases">
        <title>Complete sequence of Shewanella loihica PV-4.</title>
        <authorList>
            <consortium name="US DOE Joint Genome Institute"/>
            <person name="Copeland A."/>
            <person name="Lucas S."/>
            <person name="Lapidus A."/>
            <person name="Barry K."/>
            <person name="Detter J.C."/>
            <person name="Glavina del Rio T."/>
            <person name="Hammon N."/>
            <person name="Israni S."/>
            <person name="Dalin E."/>
            <person name="Tice H."/>
            <person name="Pitluck S."/>
            <person name="Chain P."/>
            <person name="Malfatti S."/>
            <person name="Shin M."/>
            <person name="Vergez L."/>
            <person name="Schmutz J."/>
            <person name="Larimer F."/>
            <person name="Land M."/>
            <person name="Hauser L."/>
            <person name="Kyrpides N."/>
            <person name="Mikhailova N."/>
            <person name="Romine M.F."/>
            <person name="Serres G."/>
            <person name="Fredrickson J."/>
            <person name="Tiedje J."/>
            <person name="Richardson P."/>
        </authorList>
    </citation>
    <scope>NUCLEOTIDE SEQUENCE [LARGE SCALE GENOMIC DNA]</scope>
    <source>
        <strain>ATCC BAA-1088 / PV-4</strain>
    </source>
</reference>
<organism>
    <name type="scientific">Shewanella loihica (strain ATCC BAA-1088 / PV-4)</name>
    <dbReference type="NCBI Taxonomy" id="323850"/>
    <lineage>
        <taxon>Bacteria</taxon>
        <taxon>Pseudomonadati</taxon>
        <taxon>Pseudomonadota</taxon>
        <taxon>Gammaproteobacteria</taxon>
        <taxon>Alteromonadales</taxon>
        <taxon>Shewanellaceae</taxon>
        <taxon>Shewanella</taxon>
    </lineage>
</organism>
<gene>
    <name evidence="1" type="primary">rimK</name>
    <name type="ordered locus">Shew_3664</name>
</gene>